<organism>
    <name type="scientific">Geobacillus thermodenitrificans (strain NG80-2)</name>
    <dbReference type="NCBI Taxonomy" id="420246"/>
    <lineage>
        <taxon>Bacteria</taxon>
        <taxon>Bacillati</taxon>
        <taxon>Bacillota</taxon>
        <taxon>Bacilli</taxon>
        <taxon>Bacillales</taxon>
        <taxon>Anoxybacillaceae</taxon>
        <taxon>Geobacillus</taxon>
    </lineage>
</organism>
<keyword id="KW-0028">Amino-acid biosynthesis</keyword>
<keyword id="KW-0100">Branched-chain amino acid biosynthesis</keyword>
<keyword id="KW-0963">Cytoplasm</keyword>
<keyword id="KW-0432">Leucine biosynthesis</keyword>
<keyword id="KW-0464">Manganese</keyword>
<keyword id="KW-0479">Metal-binding</keyword>
<keyword id="KW-0808">Transferase</keyword>
<dbReference type="EC" id="2.3.3.13" evidence="1"/>
<dbReference type="EMBL" id="CP000557">
    <property type="protein sequence ID" value="ABO67932.1"/>
    <property type="molecule type" value="Genomic_DNA"/>
</dbReference>
<dbReference type="RefSeq" id="WP_008881117.1">
    <property type="nucleotide sequence ID" value="NC_009328.1"/>
</dbReference>
<dbReference type="SMR" id="A4IRH8"/>
<dbReference type="GeneID" id="87623265"/>
<dbReference type="KEGG" id="gtn:GTNG_2587"/>
<dbReference type="eggNOG" id="COG0119">
    <property type="taxonomic scope" value="Bacteria"/>
</dbReference>
<dbReference type="HOGENOM" id="CLU_022158_0_1_9"/>
<dbReference type="UniPathway" id="UPA00048">
    <property type="reaction ID" value="UER00070"/>
</dbReference>
<dbReference type="Proteomes" id="UP000001578">
    <property type="component" value="Chromosome"/>
</dbReference>
<dbReference type="GO" id="GO:0005737">
    <property type="term" value="C:cytoplasm"/>
    <property type="evidence" value="ECO:0007669"/>
    <property type="project" value="UniProtKB-SubCell"/>
</dbReference>
<dbReference type="GO" id="GO:0003852">
    <property type="term" value="F:2-isopropylmalate synthase activity"/>
    <property type="evidence" value="ECO:0007669"/>
    <property type="project" value="UniProtKB-UniRule"/>
</dbReference>
<dbReference type="GO" id="GO:0003985">
    <property type="term" value="F:acetyl-CoA C-acetyltransferase activity"/>
    <property type="evidence" value="ECO:0007669"/>
    <property type="project" value="UniProtKB-UniRule"/>
</dbReference>
<dbReference type="GO" id="GO:0030145">
    <property type="term" value="F:manganese ion binding"/>
    <property type="evidence" value="ECO:0007669"/>
    <property type="project" value="UniProtKB-UniRule"/>
</dbReference>
<dbReference type="GO" id="GO:0009098">
    <property type="term" value="P:L-leucine biosynthetic process"/>
    <property type="evidence" value="ECO:0007669"/>
    <property type="project" value="UniProtKB-UniRule"/>
</dbReference>
<dbReference type="CDD" id="cd07940">
    <property type="entry name" value="DRE_TIM_IPMS"/>
    <property type="match status" value="1"/>
</dbReference>
<dbReference type="FunFam" id="1.10.238.260:FF:000001">
    <property type="entry name" value="2-isopropylmalate synthase"/>
    <property type="match status" value="1"/>
</dbReference>
<dbReference type="FunFam" id="3.20.20.70:FF:000010">
    <property type="entry name" value="2-isopropylmalate synthase"/>
    <property type="match status" value="1"/>
</dbReference>
<dbReference type="FunFam" id="3.30.160.270:FF:000003">
    <property type="entry name" value="2-isopropylmalate synthase"/>
    <property type="match status" value="1"/>
</dbReference>
<dbReference type="Gene3D" id="1.10.238.260">
    <property type="match status" value="1"/>
</dbReference>
<dbReference type="Gene3D" id="3.30.160.270">
    <property type="match status" value="1"/>
</dbReference>
<dbReference type="Gene3D" id="3.20.20.70">
    <property type="entry name" value="Aldolase class I"/>
    <property type="match status" value="1"/>
</dbReference>
<dbReference type="HAMAP" id="MF_01025">
    <property type="entry name" value="LeuA_type1"/>
    <property type="match status" value="1"/>
</dbReference>
<dbReference type="InterPro" id="IPR050073">
    <property type="entry name" value="2-IPM_HCS-like"/>
</dbReference>
<dbReference type="InterPro" id="IPR013709">
    <property type="entry name" value="2-isopropylmalate_synth_dimer"/>
</dbReference>
<dbReference type="InterPro" id="IPR002034">
    <property type="entry name" value="AIPM/Hcit_synth_CS"/>
</dbReference>
<dbReference type="InterPro" id="IPR013785">
    <property type="entry name" value="Aldolase_TIM"/>
</dbReference>
<dbReference type="InterPro" id="IPR054691">
    <property type="entry name" value="LeuA/HCS_post-cat"/>
</dbReference>
<dbReference type="InterPro" id="IPR036230">
    <property type="entry name" value="LeuA_allosteric_dom_sf"/>
</dbReference>
<dbReference type="InterPro" id="IPR005671">
    <property type="entry name" value="LeuA_bact_synth"/>
</dbReference>
<dbReference type="InterPro" id="IPR000891">
    <property type="entry name" value="PYR_CT"/>
</dbReference>
<dbReference type="NCBIfam" id="TIGR00973">
    <property type="entry name" value="leuA_bact"/>
    <property type="match status" value="1"/>
</dbReference>
<dbReference type="NCBIfam" id="NF002086">
    <property type="entry name" value="PRK00915.1-3"/>
    <property type="match status" value="1"/>
</dbReference>
<dbReference type="NCBIfam" id="NF002088">
    <property type="entry name" value="PRK00915.1-5"/>
    <property type="match status" value="1"/>
</dbReference>
<dbReference type="PANTHER" id="PTHR10277:SF9">
    <property type="entry name" value="2-ISOPROPYLMALATE SYNTHASE 1, CHLOROPLASTIC-RELATED"/>
    <property type="match status" value="1"/>
</dbReference>
<dbReference type="PANTHER" id="PTHR10277">
    <property type="entry name" value="HOMOCITRATE SYNTHASE-RELATED"/>
    <property type="match status" value="1"/>
</dbReference>
<dbReference type="Pfam" id="PF22617">
    <property type="entry name" value="HCS_D2"/>
    <property type="match status" value="1"/>
</dbReference>
<dbReference type="Pfam" id="PF00682">
    <property type="entry name" value="HMGL-like"/>
    <property type="match status" value="1"/>
</dbReference>
<dbReference type="Pfam" id="PF08502">
    <property type="entry name" value="LeuA_dimer"/>
    <property type="match status" value="1"/>
</dbReference>
<dbReference type="SMART" id="SM00917">
    <property type="entry name" value="LeuA_dimer"/>
    <property type="match status" value="1"/>
</dbReference>
<dbReference type="SUPFAM" id="SSF110921">
    <property type="entry name" value="2-isopropylmalate synthase LeuA, allosteric (dimerisation) domain"/>
    <property type="match status" value="1"/>
</dbReference>
<dbReference type="SUPFAM" id="SSF51569">
    <property type="entry name" value="Aldolase"/>
    <property type="match status" value="1"/>
</dbReference>
<dbReference type="PROSITE" id="PS00815">
    <property type="entry name" value="AIPM_HOMOCIT_SYNTH_1"/>
    <property type="match status" value="1"/>
</dbReference>
<dbReference type="PROSITE" id="PS00816">
    <property type="entry name" value="AIPM_HOMOCIT_SYNTH_2"/>
    <property type="match status" value="1"/>
</dbReference>
<dbReference type="PROSITE" id="PS50991">
    <property type="entry name" value="PYR_CT"/>
    <property type="match status" value="1"/>
</dbReference>
<protein>
    <recommendedName>
        <fullName evidence="1">2-isopropylmalate synthase</fullName>
        <ecNumber evidence="1">2.3.3.13</ecNumber>
    </recommendedName>
    <alternativeName>
        <fullName evidence="1">Alpha-IPM synthase</fullName>
    </alternativeName>
    <alternativeName>
        <fullName evidence="1">Alpha-isopropylmalate synthase</fullName>
    </alternativeName>
</protein>
<gene>
    <name evidence="1" type="primary">leuA</name>
    <name type="ordered locus">GTNG_2587</name>
</gene>
<reference key="1">
    <citation type="journal article" date="2007" name="Proc. Natl. Acad. Sci. U.S.A.">
        <title>Genome and proteome of long-chain alkane degrading Geobacillus thermodenitrificans NG80-2 isolated from a deep-subsurface oil reservoir.</title>
        <authorList>
            <person name="Feng L."/>
            <person name="Wang W."/>
            <person name="Cheng J."/>
            <person name="Ren Y."/>
            <person name="Zhao G."/>
            <person name="Gao C."/>
            <person name="Tang Y."/>
            <person name="Liu X."/>
            <person name="Han W."/>
            <person name="Peng X."/>
            <person name="Liu R."/>
            <person name="Wang L."/>
        </authorList>
    </citation>
    <scope>NUCLEOTIDE SEQUENCE [LARGE SCALE GENOMIC DNA]</scope>
    <source>
        <strain>NG80-2</strain>
    </source>
</reference>
<comment type="function">
    <text evidence="1">Catalyzes the condensation of the acetyl group of acetyl-CoA with 3-methyl-2-oxobutanoate (2-ketoisovalerate) to form 3-carboxy-3-hydroxy-4-methylpentanoate (2-isopropylmalate).</text>
</comment>
<comment type="catalytic activity">
    <reaction evidence="1">
        <text>3-methyl-2-oxobutanoate + acetyl-CoA + H2O = (2S)-2-isopropylmalate + CoA + H(+)</text>
        <dbReference type="Rhea" id="RHEA:21524"/>
        <dbReference type="ChEBI" id="CHEBI:1178"/>
        <dbReference type="ChEBI" id="CHEBI:11851"/>
        <dbReference type="ChEBI" id="CHEBI:15377"/>
        <dbReference type="ChEBI" id="CHEBI:15378"/>
        <dbReference type="ChEBI" id="CHEBI:57287"/>
        <dbReference type="ChEBI" id="CHEBI:57288"/>
        <dbReference type="EC" id="2.3.3.13"/>
    </reaction>
</comment>
<comment type="cofactor">
    <cofactor evidence="1">
        <name>Mn(2+)</name>
        <dbReference type="ChEBI" id="CHEBI:29035"/>
    </cofactor>
</comment>
<comment type="pathway">
    <text evidence="1">Amino-acid biosynthesis; L-leucine biosynthesis; L-leucine from 3-methyl-2-oxobutanoate: step 1/4.</text>
</comment>
<comment type="subunit">
    <text evidence="1">Homodimer.</text>
</comment>
<comment type="subcellular location">
    <subcellularLocation>
        <location evidence="1">Cytoplasm</location>
    </subcellularLocation>
</comment>
<comment type="similarity">
    <text evidence="1">Belongs to the alpha-IPM synthase/homocitrate synthase family. LeuA type 1 subfamily.</text>
</comment>
<accession>A4IRH8</accession>
<proteinExistence type="inferred from homology"/>
<evidence type="ECO:0000255" key="1">
    <source>
        <dbReference type="HAMAP-Rule" id="MF_01025"/>
    </source>
</evidence>
<name>LEU1_GEOTN</name>
<feature type="chain" id="PRO_1000149204" description="2-isopropylmalate synthase">
    <location>
        <begin position="1"/>
        <end position="515"/>
    </location>
</feature>
<feature type="domain" description="Pyruvate carboxyltransferase" evidence="1">
    <location>
        <begin position="4"/>
        <end position="266"/>
    </location>
</feature>
<feature type="region of interest" description="Regulatory domain" evidence="1">
    <location>
        <begin position="391"/>
        <end position="515"/>
    </location>
</feature>
<feature type="binding site" evidence="1">
    <location>
        <position position="13"/>
    </location>
    <ligand>
        <name>Mn(2+)</name>
        <dbReference type="ChEBI" id="CHEBI:29035"/>
    </ligand>
</feature>
<feature type="binding site" evidence="1">
    <location>
        <position position="201"/>
    </location>
    <ligand>
        <name>Mn(2+)</name>
        <dbReference type="ChEBI" id="CHEBI:29035"/>
    </ligand>
</feature>
<feature type="binding site" evidence="1">
    <location>
        <position position="203"/>
    </location>
    <ligand>
        <name>Mn(2+)</name>
        <dbReference type="ChEBI" id="CHEBI:29035"/>
    </ligand>
</feature>
<feature type="binding site" evidence="1">
    <location>
        <position position="237"/>
    </location>
    <ligand>
        <name>Mn(2+)</name>
        <dbReference type="ChEBI" id="CHEBI:29035"/>
    </ligand>
</feature>
<sequence length="515" mass="56916">MRKIKFFDTTLRDGEQSAGVNLNLQEKLEIARQLERLQVDIIEAGFPASSKGDFEAVKQIAETVRTCSVTGLSRSVRSDIDAAWEALKGGAEPRLHLFIATSPIHMVHKLRMTPEQVIEAAVEAVKYAKRFFPIVQWSAEDACRSELPFLAKIVTEVIKAGASVINIPDTVGYITPKEYGEIFLYLRNNVPNIENISLSAHCHDDLGMAVINSLSAIEHGATQVECTINGIGERAGNAALEEIAVALHIRKDYYQVETRLNLQEIKRTSNLVSKLTGMVVPPNKAVVGKNAFAHESGIHQDGVLKEKTTYEIISPELVGVSSNSMVLGKHSGRHALRNRVEELGYTLSEEEINQLFVRFKELADKKKDVTDDDLIALIFEEKFDHFKDFYQLSSIQVQYGTNQIPTAVVVLKDGKGNTIQEAATGAGSVEALYNTLERCFQTAVTLLDYRIESVGGGRDALAQVFVKVRVNDVETSGRGTAQDVLEASAKAYINAMNRMFMIEAMRAENEKVTTP</sequence>